<dbReference type="EMBL" id="X54714">
    <property type="protein sequence ID" value="CAA38517.1"/>
    <property type="molecule type" value="mRNA"/>
</dbReference>
<dbReference type="PIR" id="S21356">
    <property type="entry name" value="S21356"/>
</dbReference>
<dbReference type="GO" id="GO:0005615">
    <property type="term" value="C:extracellular space"/>
    <property type="evidence" value="ECO:0007669"/>
    <property type="project" value="TreeGrafter"/>
</dbReference>
<dbReference type="GO" id="GO:1903496">
    <property type="term" value="P:response to 11-deoxycorticosterone"/>
    <property type="evidence" value="ECO:0007669"/>
    <property type="project" value="TreeGrafter"/>
</dbReference>
<dbReference type="GO" id="GO:1903494">
    <property type="term" value="P:response to dehydroepiandrosterone"/>
    <property type="evidence" value="ECO:0007669"/>
    <property type="project" value="TreeGrafter"/>
</dbReference>
<dbReference type="GO" id="GO:0032355">
    <property type="term" value="P:response to estradiol"/>
    <property type="evidence" value="ECO:0007669"/>
    <property type="project" value="TreeGrafter"/>
</dbReference>
<dbReference type="GO" id="GO:0032570">
    <property type="term" value="P:response to progesterone"/>
    <property type="evidence" value="ECO:0007669"/>
    <property type="project" value="TreeGrafter"/>
</dbReference>
<dbReference type="InterPro" id="IPR026999">
    <property type="entry name" value="Alpha-s1_casein"/>
</dbReference>
<dbReference type="PANTHER" id="PTHR10240">
    <property type="entry name" value="ALPHA-S1-CASEIN"/>
    <property type="match status" value="1"/>
</dbReference>
<dbReference type="PANTHER" id="PTHR10240:SF0">
    <property type="entry name" value="ALPHA-S1-CASEIN"/>
    <property type="match status" value="1"/>
</dbReference>
<evidence type="ECO:0000250" key="1"/>
<evidence type="ECO:0000250" key="2">
    <source>
        <dbReference type="UniProtKB" id="P02662"/>
    </source>
</evidence>
<evidence type="ECO:0000250" key="3">
    <source>
        <dbReference type="UniProtKB" id="P04653"/>
    </source>
</evidence>
<evidence type="ECO:0000250" key="4">
    <source>
        <dbReference type="UniProtKB" id="P18626"/>
    </source>
</evidence>
<evidence type="ECO:0000256" key="5">
    <source>
        <dbReference type="SAM" id="MobiDB-lite"/>
    </source>
</evidence>
<evidence type="ECO:0000305" key="6"/>
<accession>P28549</accession>
<gene>
    <name type="primary">CSN1S1</name>
</gene>
<proteinExistence type="evidence at transcript level"/>
<comment type="function">
    <text>Important role in the capacity of milk to transport calcium phosphate.</text>
</comment>
<comment type="subcellular location">
    <subcellularLocation>
        <location>Secreted</location>
    </subcellularLocation>
</comment>
<comment type="tissue specificity">
    <text>Mammary gland specific. Secreted in milk.</text>
</comment>
<comment type="induction">
    <text>Maximal induction is dependent upon prolactin insulin and cortisol.</text>
</comment>
<comment type="similarity">
    <text evidence="6">Belongs to the alpha-casein family.</text>
</comment>
<sequence>MKLLIFSCLVTLALARPDALRLSIDRHFKHRELENRLNEDPIPVSEASSSEESVHQLNRDRRPLEKYELDKYREDLKTSSSEEFVTPSTNERVRRQVEYNFNEEDSSASRERKIEDFSEHDRQYLRRRVEERALNLRYLEPLYYATEPEYYYYYAYVPVSSHDIPYQQKPLSLLPAKSHYLISTGLLNEPLPILRERLGRGFQSPSLLILVLTENSNLFMGSVFYWCLQIAHPMQEI</sequence>
<organism>
    <name type="scientific">Notamacropus eugenii</name>
    <name type="common">Tammar wallaby</name>
    <name type="synonym">Macropus eugenii</name>
    <dbReference type="NCBI Taxonomy" id="9315"/>
    <lineage>
        <taxon>Eukaryota</taxon>
        <taxon>Metazoa</taxon>
        <taxon>Chordata</taxon>
        <taxon>Craniata</taxon>
        <taxon>Vertebrata</taxon>
        <taxon>Euteleostomi</taxon>
        <taxon>Mammalia</taxon>
        <taxon>Metatheria</taxon>
        <taxon>Diprotodontia</taxon>
        <taxon>Macropodidae</taxon>
        <taxon>Notamacropus</taxon>
    </lineage>
</organism>
<keyword id="KW-0494">Milk protein</keyword>
<keyword id="KW-0597">Phosphoprotein</keyword>
<keyword id="KW-0964">Secreted</keyword>
<keyword id="KW-0732">Signal</keyword>
<protein>
    <recommendedName>
        <fullName>Alpha-S1-casein</fullName>
        <shortName>Alpha-casein</shortName>
    </recommendedName>
</protein>
<name>CASA1_NOTEU</name>
<feature type="signal peptide" evidence="1">
    <location>
        <begin position="1"/>
        <end position="15"/>
    </location>
</feature>
<feature type="chain" id="PRO_0000004452" description="Alpha-S1-casein">
    <location>
        <begin position="16"/>
        <end position="237"/>
    </location>
</feature>
<feature type="region of interest" description="Disordered" evidence="5">
    <location>
        <begin position="39"/>
        <end position="60"/>
    </location>
</feature>
<feature type="modified residue" description="Phosphoserine" evidence="4">
    <location>
        <position position="79"/>
    </location>
</feature>
<feature type="modified residue" description="Phosphoserine" evidence="3">
    <location>
        <position position="80"/>
    </location>
</feature>
<feature type="modified residue" description="Phosphoserine" evidence="2">
    <location>
        <position position="81"/>
    </location>
</feature>
<reference key="1">
    <citation type="journal article" date="1992" name="J. Mol. Endocrinol.">
        <title>Molecular characterization and in-vitro hormonal requirements for expression of two casein genes from a marsupial.</title>
        <authorList>
            <person name="Collet C."/>
            <person name="Joseph R."/>
            <person name="Nicholas K.R."/>
        </authorList>
    </citation>
    <scope>NUCLEOTIDE SEQUENCE [MRNA]</scope>
    <source>
        <tissue>Mammary gland</tissue>
    </source>
</reference>